<organism>
    <name type="scientific">Yersinia pseudotuberculosis serotype IB (strain PB1/+)</name>
    <dbReference type="NCBI Taxonomy" id="502801"/>
    <lineage>
        <taxon>Bacteria</taxon>
        <taxon>Pseudomonadati</taxon>
        <taxon>Pseudomonadota</taxon>
        <taxon>Gammaproteobacteria</taxon>
        <taxon>Enterobacterales</taxon>
        <taxon>Yersiniaceae</taxon>
        <taxon>Yersinia</taxon>
    </lineage>
</organism>
<accession>B2K7Z2</accession>
<proteinExistence type="inferred from homology"/>
<dbReference type="EC" id="4.2.99.20" evidence="1"/>
<dbReference type="EMBL" id="CP001048">
    <property type="protein sequence ID" value="ACC89613.1"/>
    <property type="molecule type" value="Genomic_DNA"/>
</dbReference>
<dbReference type="RefSeq" id="WP_012413804.1">
    <property type="nucleotide sequence ID" value="NZ_CP009780.1"/>
</dbReference>
<dbReference type="SMR" id="B2K7Z2"/>
<dbReference type="ESTHER" id="yerpe-YPO2526">
    <property type="family name" value="MenH_SHCHC"/>
</dbReference>
<dbReference type="KEGG" id="ypb:YPTS_2653"/>
<dbReference type="PATRIC" id="fig|502801.10.peg.2069"/>
<dbReference type="UniPathway" id="UPA00079"/>
<dbReference type="UniPathway" id="UPA01057">
    <property type="reaction ID" value="UER00900"/>
</dbReference>
<dbReference type="GO" id="GO:0070205">
    <property type="term" value="F:2-succinyl-6-hydroxy-2,4-cyclohexadiene-1-carboxylate synthase activity"/>
    <property type="evidence" value="ECO:0007669"/>
    <property type="project" value="UniProtKB-UniRule"/>
</dbReference>
<dbReference type="GO" id="GO:0009234">
    <property type="term" value="P:menaquinone biosynthetic process"/>
    <property type="evidence" value="ECO:0007669"/>
    <property type="project" value="UniProtKB-UniRule"/>
</dbReference>
<dbReference type="Gene3D" id="3.40.50.1820">
    <property type="entry name" value="alpha/beta hydrolase"/>
    <property type="match status" value="1"/>
</dbReference>
<dbReference type="HAMAP" id="MF_01660">
    <property type="entry name" value="MenH"/>
    <property type="match status" value="1"/>
</dbReference>
<dbReference type="InterPro" id="IPR000073">
    <property type="entry name" value="AB_hydrolase_1"/>
</dbReference>
<dbReference type="InterPro" id="IPR029058">
    <property type="entry name" value="AB_hydrolase_fold"/>
</dbReference>
<dbReference type="InterPro" id="IPR022485">
    <property type="entry name" value="SHCHC_synthase_MenH"/>
</dbReference>
<dbReference type="NCBIfam" id="TIGR03695">
    <property type="entry name" value="menH_SHCHC"/>
    <property type="match status" value="1"/>
</dbReference>
<dbReference type="NCBIfam" id="NF008340">
    <property type="entry name" value="PRK11126.1"/>
    <property type="match status" value="1"/>
</dbReference>
<dbReference type="PANTHER" id="PTHR42916">
    <property type="entry name" value="2-SUCCINYL-5-ENOLPYRUVYL-6-HYDROXY-3-CYCLOHEXENE-1-CARBOXYLATE SYNTHASE"/>
    <property type="match status" value="1"/>
</dbReference>
<dbReference type="PANTHER" id="PTHR42916:SF1">
    <property type="entry name" value="PROTEIN PHYLLO, CHLOROPLASTIC"/>
    <property type="match status" value="1"/>
</dbReference>
<dbReference type="Pfam" id="PF12697">
    <property type="entry name" value="Abhydrolase_6"/>
    <property type="match status" value="1"/>
</dbReference>
<dbReference type="SUPFAM" id="SSF53474">
    <property type="entry name" value="alpha/beta-Hydrolases"/>
    <property type="match status" value="1"/>
</dbReference>
<feature type="chain" id="PRO_1000187124" description="2-succinyl-6-hydroxy-2,4-cyclohexadiene-1-carboxylate synthase">
    <location>
        <begin position="1"/>
        <end position="272"/>
    </location>
</feature>
<gene>
    <name evidence="1" type="primary">menH</name>
    <name type="ordered locus">YPTS_2653</name>
</gene>
<reference key="1">
    <citation type="submission" date="2008-04" db="EMBL/GenBank/DDBJ databases">
        <title>Complete sequence of Yersinia pseudotuberculosis PB1/+.</title>
        <authorList>
            <person name="Copeland A."/>
            <person name="Lucas S."/>
            <person name="Lapidus A."/>
            <person name="Glavina del Rio T."/>
            <person name="Dalin E."/>
            <person name="Tice H."/>
            <person name="Bruce D."/>
            <person name="Goodwin L."/>
            <person name="Pitluck S."/>
            <person name="Munk A.C."/>
            <person name="Brettin T."/>
            <person name="Detter J.C."/>
            <person name="Han C."/>
            <person name="Tapia R."/>
            <person name="Schmutz J."/>
            <person name="Larimer F."/>
            <person name="Land M."/>
            <person name="Hauser L."/>
            <person name="Challacombe J.F."/>
            <person name="Green L."/>
            <person name="Lindler L.E."/>
            <person name="Nikolich M.P."/>
            <person name="Richardson P."/>
        </authorList>
    </citation>
    <scope>NUCLEOTIDE SEQUENCE [LARGE SCALE GENOMIC DNA]</scope>
    <source>
        <strain>PB1/+</strain>
    </source>
</reference>
<name>MENH_YERPB</name>
<comment type="function">
    <text evidence="1">Catalyzes a proton abstraction reaction that results in 2,5-elimination of pyruvate from 2-succinyl-5-enolpyruvyl-6-hydroxy-3-cyclohexene-1-carboxylate (SEPHCHC) and the formation of 2-succinyl-6-hydroxy-2,4-cyclohexadiene-1-carboxylate (SHCHC).</text>
</comment>
<comment type="catalytic activity">
    <reaction evidence="1">
        <text>5-enolpyruvoyl-6-hydroxy-2-succinyl-cyclohex-3-ene-1-carboxylate = (1R,6R)-6-hydroxy-2-succinyl-cyclohexa-2,4-diene-1-carboxylate + pyruvate</text>
        <dbReference type="Rhea" id="RHEA:25597"/>
        <dbReference type="ChEBI" id="CHEBI:15361"/>
        <dbReference type="ChEBI" id="CHEBI:58689"/>
        <dbReference type="ChEBI" id="CHEBI:58818"/>
        <dbReference type="EC" id="4.2.99.20"/>
    </reaction>
</comment>
<comment type="pathway">
    <text evidence="1">Quinol/quinone metabolism; 1,4-dihydroxy-2-naphthoate biosynthesis; 1,4-dihydroxy-2-naphthoate from chorismate: step 3/7.</text>
</comment>
<comment type="pathway">
    <text evidence="1">Quinol/quinone metabolism; menaquinone biosynthesis.</text>
</comment>
<comment type="subunit">
    <text evidence="1">Monomer.</text>
</comment>
<comment type="similarity">
    <text evidence="1">Belongs to the AB hydrolase superfamily. MenH family.</text>
</comment>
<evidence type="ECO:0000255" key="1">
    <source>
        <dbReference type="HAMAP-Rule" id="MF_01660"/>
    </source>
</evidence>
<sequence length="272" mass="30254">MTTLACQKLAPHPESPRHQHAGPWLVWLHGLLGSGQDWLPVAQLCGDYPSLLIDLPGHGQSVSLSADGFADISRQLSQTLQANGIREYWLAGYSLGGRIAIYHACYGRHHGLQGLLVEGGNLGLENAELRQARLQQDRQWAQRFRQEPLPQVLDDWYQQAVFADLDPQQREQLVLLRADNHGPAVAEMLEATSLGHQPWLLPALQRLNVPYTYLCGDRDHKFLQLAQQYRLPLHTLARAGHNAHRANPGAFAAQVLAFLSQSSCLPPSSLSR</sequence>
<keyword id="KW-0456">Lyase</keyword>
<keyword id="KW-0474">Menaquinone biosynthesis</keyword>
<protein>
    <recommendedName>
        <fullName evidence="1">2-succinyl-6-hydroxy-2,4-cyclohexadiene-1-carboxylate synthase</fullName>
        <shortName evidence="1">SHCHC synthase</shortName>
        <ecNumber evidence="1">4.2.99.20</ecNumber>
    </recommendedName>
</protein>